<feature type="signal peptide" evidence="2">
    <location>
        <begin position="1"/>
        <end position="27"/>
    </location>
</feature>
<feature type="chain" id="PRO_0000349892" description="Putative phospholipase A1">
    <location>
        <begin position="28"/>
        <end position="382"/>
    </location>
</feature>
<feature type="topological domain" description="Periplasmic" evidence="2">
    <location>
        <begin position="28"/>
        <end position="65"/>
    </location>
</feature>
<feature type="transmembrane region" description="Beta stranded" evidence="2">
    <location>
        <begin position="66"/>
        <end position="78"/>
    </location>
</feature>
<feature type="topological domain" description="Extracellular" evidence="2">
    <location>
        <begin position="79"/>
        <end position="168"/>
    </location>
</feature>
<feature type="transmembrane region" description="Beta stranded" evidence="2">
    <location>
        <begin position="169"/>
        <end position="183"/>
    </location>
</feature>
<feature type="topological domain" description="Periplasmic" evidence="2">
    <location>
        <begin position="184"/>
        <end position="189"/>
    </location>
</feature>
<feature type="transmembrane region" description="Beta stranded" evidence="2">
    <location>
        <begin position="190"/>
        <end position="202"/>
    </location>
</feature>
<feature type="topological domain" description="Extracellular" evidence="2">
    <location>
        <begin position="203"/>
        <end position="213"/>
    </location>
</feature>
<feature type="transmembrane region" description="Beta stranded" evidence="2">
    <location>
        <begin position="214"/>
        <end position="233"/>
    </location>
</feature>
<feature type="topological domain" description="Periplasmic" evidence="2">
    <location>
        <begin position="234"/>
        <end position="236"/>
    </location>
</feature>
<feature type="transmembrane region" description="Beta stranded" evidence="2">
    <location>
        <begin position="237"/>
        <end position="250"/>
    </location>
</feature>
<feature type="topological domain" description="Extracellular" evidence="2">
    <location>
        <begin position="251"/>
        <end position="259"/>
    </location>
</feature>
<feature type="transmembrane region" description="Beta stranded" evidence="2">
    <location>
        <begin position="260"/>
        <end position="272"/>
    </location>
</feature>
<feature type="topological domain" description="Periplasmic" evidence="2">
    <location>
        <begin position="273"/>
        <end position="274"/>
    </location>
</feature>
<feature type="transmembrane region" description="Beta stranded" evidence="2">
    <location>
        <begin position="275"/>
        <end position="284"/>
    </location>
</feature>
<feature type="topological domain" description="Extracellular" evidence="2">
    <location>
        <begin position="285"/>
        <end position="306"/>
    </location>
</feature>
<feature type="transmembrane region" description="Beta stranded" evidence="2">
    <location>
        <begin position="307"/>
        <end position="313"/>
    </location>
</feature>
<feature type="topological domain" description="Periplasmic" evidence="2">
    <location>
        <begin position="314"/>
        <end position="315"/>
    </location>
</feature>
<feature type="transmembrane region" description="Beta stranded" evidence="2">
    <location>
        <begin position="316"/>
        <end position="325"/>
    </location>
</feature>
<feature type="topological domain" description="Extracellular" evidence="2">
    <location>
        <begin position="326"/>
        <end position="332"/>
    </location>
</feature>
<feature type="transmembrane region" description="Beta stranded" evidence="2">
    <location>
        <begin position="333"/>
        <end position="341"/>
    </location>
</feature>
<feature type="topological domain" description="Periplasmic" evidence="2">
    <location>
        <begin position="342"/>
        <end position="346"/>
    </location>
</feature>
<feature type="transmembrane region" description="Beta stranded" evidence="2">
    <location>
        <begin position="347"/>
        <end position="356"/>
    </location>
</feature>
<feature type="topological domain" description="Extracellular" evidence="2">
    <location>
        <begin position="357"/>
        <end position="365"/>
    </location>
</feature>
<feature type="transmembrane region" description="Beta stranded" evidence="2">
    <location>
        <begin position="366"/>
        <end position="377"/>
    </location>
</feature>
<feature type="topological domain" description="Periplasmic" evidence="2">
    <location>
        <begin position="378"/>
        <end position="382"/>
    </location>
</feature>
<feature type="active site" description="Proton acceptor" evidence="1">
    <location>
        <position position="248"/>
    </location>
</feature>
<feature type="active site" description="Nucleophile" evidence="1">
    <location>
        <position position="250"/>
    </location>
</feature>
<feature type="binding site" description="in dimeric form" evidence="1">
    <location>
        <position position="211"/>
    </location>
    <ligand>
        <name>Ca(2+)</name>
        <dbReference type="ChEBI" id="CHEBI:29108"/>
        <label>1</label>
    </ligand>
</feature>
<feature type="binding site" description="in dimeric form" evidence="1">
    <location>
        <position position="258"/>
    </location>
    <ligand>
        <name>Ca(2+)</name>
        <dbReference type="ChEBI" id="CHEBI:29108"/>
        <label>2</label>
    </ligand>
</feature>
<feature type="binding site" description="in monomeric form" evidence="1">
    <location>
        <position position="294"/>
    </location>
    <ligand>
        <name>Ca(2+)</name>
        <dbReference type="ChEBI" id="CHEBI:29108"/>
        <label>3</label>
    </ligand>
</feature>
<sequence length="382" mass="42714">MPTMGAEMNTRNMRYILLTGLLPMASAFGETALQCAALTDNVTRLACYDRIFAAQLPSSAGQEGQESKAVLNLTETVRSSLDKGEAVIVVEKGGDALPADSAGETADIYTPLSLMYDLDKNDLRGLLGVREHNPMYLMPLWYNNSPNYAPGSPTRGTTVQEKFGQQKRAETKLQVSFKSKIAEDLFKTRADLWFGYTQRSDWQIYNQGRKSAPFRNTDYKPEIFLTQPVKADLPFGGRLRMLGAGFVHQSNGQSRPESRSWNRIYAMAGMEWGKLTVIPRVWVRAFDQSGDKNDNPDIADYMGYGDVKLQYRLNDRQNVYSVLRYNPKTGYGAIEAAYTFPIKGKLKGVVRGFHGYGESLIDYNHKQNGIGIGLMFNDLDGI</sequence>
<accession>Q9K0U7</accession>
<name>PA1_NEIMB</name>
<dbReference type="EC" id="3.1.1.32"/>
<dbReference type="EC" id="3.1.1.4"/>
<dbReference type="EMBL" id="AE002098">
    <property type="protein sequence ID" value="AAF40901.1"/>
    <property type="molecule type" value="Genomic_DNA"/>
</dbReference>
<dbReference type="PIR" id="E81195">
    <property type="entry name" value="E81195"/>
</dbReference>
<dbReference type="RefSeq" id="NP_273511.1">
    <property type="nucleotide sequence ID" value="NC_003112.2"/>
</dbReference>
<dbReference type="RefSeq" id="WP_002216585.1">
    <property type="nucleotide sequence ID" value="NC_003112.2"/>
</dbReference>
<dbReference type="SMR" id="Q9K0U7"/>
<dbReference type="FunCoup" id="Q9K0U7">
    <property type="interactions" value="52"/>
</dbReference>
<dbReference type="STRING" id="122586.NMB0464"/>
<dbReference type="PaxDb" id="122586-NMB0464"/>
<dbReference type="KEGG" id="nme:NMB0464"/>
<dbReference type="PATRIC" id="fig|122586.8.peg.608"/>
<dbReference type="HOGENOM" id="CLU_045813_0_0_4"/>
<dbReference type="InParanoid" id="Q9K0U7"/>
<dbReference type="OrthoDB" id="188433at2"/>
<dbReference type="Proteomes" id="UP000000425">
    <property type="component" value="Chromosome"/>
</dbReference>
<dbReference type="GO" id="GO:0009279">
    <property type="term" value="C:cell outer membrane"/>
    <property type="evidence" value="ECO:0007669"/>
    <property type="project" value="UniProtKB-SubCell"/>
</dbReference>
<dbReference type="GO" id="GO:0046872">
    <property type="term" value="F:metal ion binding"/>
    <property type="evidence" value="ECO:0007669"/>
    <property type="project" value="UniProtKB-KW"/>
</dbReference>
<dbReference type="GO" id="GO:0008970">
    <property type="term" value="F:phospholipase A1 activity"/>
    <property type="evidence" value="ECO:0007669"/>
    <property type="project" value="UniProtKB-EC"/>
</dbReference>
<dbReference type="GO" id="GO:0004623">
    <property type="term" value="F:phospholipase A2 activity"/>
    <property type="evidence" value="ECO:0007669"/>
    <property type="project" value="UniProtKB-EC"/>
</dbReference>
<dbReference type="GO" id="GO:0016042">
    <property type="term" value="P:lipid catabolic process"/>
    <property type="evidence" value="ECO:0007669"/>
    <property type="project" value="UniProtKB-KW"/>
</dbReference>
<dbReference type="CDD" id="cd00541">
    <property type="entry name" value="OMPLA"/>
    <property type="match status" value="1"/>
</dbReference>
<dbReference type="Gene3D" id="2.40.230.10">
    <property type="entry name" value="Phospholipase A1"/>
    <property type="match status" value="1"/>
</dbReference>
<dbReference type="InterPro" id="IPR003187">
    <property type="entry name" value="PLipase_A1"/>
</dbReference>
<dbReference type="InterPro" id="IPR036541">
    <property type="entry name" value="PLipase_A1_sf"/>
</dbReference>
<dbReference type="PANTHER" id="PTHR40457">
    <property type="entry name" value="PHOSPHOLIPASE A1"/>
    <property type="match status" value="1"/>
</dbReference>
<dbReference type="PANTHER" id="PTHR40457:SF1">
    <property type="entry name" value="PHOSPHOLIPASE A1"/>
    <property type="match status" value="1"/>
</dbReference>
<dbReference type="Pfam" id="PF02253">
    <property type="entry name" value="PLA1"/>
    <property type="match status" value="1"/>
</dbReference>
<dbReference type="PRINTS" id="PR01486">
    <property type="entry name" value="PHPHLIPASEA1"/>
</dbReference>
<dbReference type="SUPFAM" id="SSF56931">
    <property type="entry name" value="Outer membrane phospholipase A (OMPLA)"/>
    <property type="match status" value="1"/>
</dbReference>
<comment type="function">
    <text evidence="1">Hydrolysis of phosphatidylcholine with phospholipase A2 (EC 3.1.1.4) and phospholipase A1 (EC 3.1.1.32) activities.</text>
</comment>
<comment type="catalytic activity">
    <reaction>
        <text>a 1,2-diacyl-sn-glycero-3-phosphocholine + H2O = a 2-acyl-sn-glycero-3-phosphocholine + a fatty acid + H(+)</text>
        <dbReference type="Rhea" id="RHEA:18689"/>
        <dbReference type="ChEBI" id="CHEBI:15377"/>
        <dbReference type="ChEBI" id="CHEBI:15378"/>
        <dbReference type="ChEBI" id="CHEBI:28868"/>
        <dbReference type="ChEBI" id="CHEBI:57643"/>
        <dbReference type="ChEBI" id="CHEBI:57875"/>
        <dbReference type="EC" id="3.1.1.32"/>
    </reaction>
</comment>
<comment type="catalytic activity">
    <reaction>
        <text>a 1,2-diacyl-sn-glycero-3-phosphocholine + H2O = a 1-acyl-sn-glycero-3-phosphocholine + a fatty acid + H(+)</text>
        <dbReference type="Rhea" id="RHEA:15801"/>
        <dbReference type="ChEBI" id="CHEBI:15377"/>
        <dbReference type="ChEBI" id="CHEBI:15378"/>
        <dbReference type="ChEBI" id="CHEBI:28868"/>
        <dbReference type="ChEBI" id="CHEBI:57643"/>
        <dbReference type="ChEBI" id="CHEBI:58168"/>
        <dbReference type="EC" id="3.1.1.4"/>
    </reaction>
</comment>
<comment type="cofactor">
    <cofactor evidence="1">
        <name>Ca(2+)</name>
        <dbReference type="ChEBI" id="CHEBI:29108"/>
    </cofactor>
    <text evidence="1">Binds 1 Ca(2+) ion per monomer. In the dimeric form the Ca(2+) is bound by different amino acids with binding of each Ca(2+) shared with ligands coming from each monomer. The Ca(2+) ion may have a role in catalysis.</text>
</comment>
<comment type="subunit">
    <text evidence="1">Homodimer; dimerization is reversible, and the dimeric form is the active one.</text>
</comment>
<comment type="subcellular location">
    <subcellularLocation>
        <location evidence="1">Cell outer membrane</location>
        <topology evidence="1">Multi-pass membrane protein</topology>
    </subcellularLocation>
    <text evidence="1">One of the very few enzymes located there.</text>
</comment>
<comment type="miscellaneous">
    <text>Present in outer membrane vesicle formulations which are used as vaccines in human.</text>
</comment>
<comment type="similarity">
    <text evidence="3">Belongs to the phospholipase A1 family.</text>
</comment>
<organism>
    <name type="scientific">Neisseria meningitidis serogroup B (strain ATCC BAA-335 / MC58)</name>
    <dbReference type="NCBI Taxonomy" id="122586"/>
    <lineage>
        <taxon>Bacteria</taxon>
        <taxon>Pseudomonadati</taxon>
        <taxon>Pseudomonadota</taxon>
        <taxon>Betaproteobacteria</taxon>
        <taxon>Neisseriales</taxon>
        <taxon>Neisseriaceae</taxon>
        <taxon>Neisseria</taxon>
    </lineage>
</organism>
<protein>
    <recommendedName>
        <fullName>Putative phospholipase A1</fullName>
        <ecNumber>3.1.1.32</ecNumber>
        <ecNumber>3.1.1.4</ecNumber>
    </recommendedName>
    <alternativeName>
        <fullName>Phosphatidylcholine 1-acylhydrolase</fullName>
    </alternativeName>
</protein>
<evidence type="ECO:0000250" key="1"/>
<evidence type="ECO:0000255" key="2"/>
<evidence type="ECO:0000305" key="3"/>
<proteinExistence type="evidence at protein level"/>
<reference key="1">
    <citation type="journal article" date="2000" name="Science">
        <title>Complete genome sequence of Neisseria meningitidis serogroup B strain MC58.</title>
        <authorList>
            <person name="Tettelin H."/>
            <person name="Saunders N.J."/>
            <person name="Heidelberg J.F."/>
            <person name="Jeffries A.C."/>
            <person name="Nelson K.E."/>
            <person name="Eisen J.A."/>
            <person name="Ketchum K.A."/>
            <person name="Hood D.W."/>
            <person name="Peden J.F."/>
            <person name="Dodson R.J."/>
            <person name="Nelson W.C."/>
            <person name="Gwinn M.L."/>
            <person name="DeBoy R.T."/>
            <person name="Peterson J.D."/>
            <person name="Hickey E.K."/>
            <person name="Haft D.H."/>
            <person name="Salzberg S.L."/>
            <person name="White O."/>
            <person name="Fleischmann R.D."/>
            <person name="Dougherty B.A."/>
            <person name="Mason T.M."/>
            <person name="Ciecko A."/>
            <person name="Parksey D.S."/>
            <person name="Blair E."/>
            <person name="Cittone H."/>
            <person name="Clark E.B."/>
            <person name="Cotton M.D."/>
            <person name="Utterback T.R."/>
            <person name="Khouri H.M."/>
            <person name="Qin H."/>
            <person name="Vamathevan J.J."/>
            <person name="Gill J."/>
            <person name="Scarlato V."/>
            <person name="Masignani V."/>
            <person name="Pizza M."/>
            <person name="Grandi G."/>
            <person name="Sun L."/>
            <person name="Smith H.O."/>
            <person name="Fraser C.M."/>
            <person name="Moxon E.R."/>
            <person name="Rappuoli R."/>
            <person name="Venter J.C."/>
        </authorList>
    </citation>
    <scope>NUCLEOTIDE SEQUENCE [LARGE SCALE GENOMIC DNA]</scope>
    <source>
        <strain>ATCC BAA-335 / MC58</strain>
    </source>
</reference>
<reference key="2">
    <citation type="journal article" date="2006" name="Proteomics">
        <title>Proteomic analysis of a meningococcal outer membrane vesicle vaccine prepared from the group B strain NZ98/254.</title>
        <authorList>
            <person name="Vipond C."/>
            <person name="Suker J."/>
            <person name="Jones C."/>
            <person name="Tang C."/>
            <person name="Feavers I.M."/>
            <person name="Wheeler J.X."/>
        </authorList>
    </citation>
    <scope>IDENTIFICATION BY MASS SPECTROMETRY [LARGE SCALE ANALYSIS]</scope>
    <source>
        <strain>NZ98/254 / Serogroup B</strain>
    </source>
</reference>
<gene>
    <name type="ordered locus">NMB0464</name>
</gene>
<keyword id="KW-0106">Calcium</keyword>
<keyword id="KW-0998">Cell outer membrane</keyword>
<keyword id="KW-0378">Hydrolase</keyword>
<keyword id="KW-0442">Lipid degradation</keyword>
<keyword id="KW-0443">Lipid metabolism</keyword>
<keyword id="KW-0472">Membrane</keyword>
<keyword id="KW-0479">Metal-binding</keyword>
<keyword id="KW-1185">Reference proteome</keyword>
<keyword id="KW-0732">Signal</keyword>
<keyword id="KW-0812">Transmembrane</keyword>
<keyword id="KW-1134">Transmembrane beta strand</keyword>